<reference key="1">
    <citation type="journal article" date="1997" name="Mol. Gen. Genet.">
        <title>Isolation and analysis of functional homologues of the secretion-related SAR1 gene of Saccharomyces cerevisiae from Aspergillus niger and Trichoderma reesei.</title>
        <authorList>
            <person name="Veldhuisen G."/>
            <person name="Saloheimo M."/>
            <person name="Fiers M.A."/>
            <person name="Punt P.J."/>
            <person name="Contreras R."/>
            <person name="Penttilae M."/>
            <person name="van den Hondel C.A."/>
        </authorList>
    </citation>
    <scope>NUCLEOTIDE SEQUENCE [GENOMIC DNA]</scope>
    <source>
        <strain>N401</strain>
    </source>
</reference>
<organism>
    <name type="scientific">Aspergillus niger</name>
    <dbReference type="NCBI Taxonomy" id="5061"/>
    <lineage>
        <taxon>Eukaryota</taxon>
        <taxon>Fungi</taxon>
        <taxon>Dikarya</taxon>
        <taxon>Ascomycota</taxon>
        <taxon>Pezizomycotina</taxon>
        <taxon>Eurotiomycetes</taxon>
        <taxon>Eurotiomycetidae</taxon>
        <taxon>Eurotiales</taxon>
        <taxon>Aspergillaceae</taxon>
        <taxon>Aspergillus</taxon>
        <taxon>Aspergillus subgen. Circumdati</taxon>
    </lineage>
</organism>
<comment type="function">
    <text evidence="1">Small GTPase component of the coat protein complex II (COPII) which promotes the formation of transport vesicles from the endoplasmic reticulum (ER). The coat has two main functions, the physical deformation of the endoplasmic reticulum membrane into vesicles and the selection of cargo molecules. Sar1 controls the coat assembly in a stepwise manner. Activated Sar1-GTP binds to membranes first and recruits the sec23/24 complex. These sec23/24-sar1 prebudding intermediates are then collected by the Sec13/31 complex as subunits polymerize to form coated transport vesicles. Conversion to sar1-GDP triggers coat release and recycles COPII subunits (By similarity).</text>
</comment>
<comment type="catalytic activity">
    <reaction>
        <text>GTP + H2O = GDP + phosphate + H(+)</text>
        <dbReference type="Rhea" id="RHEA:19669"/>
        <dbReference type="ChEBI" id="CHEBI:15377"/>
        <dbReference type="ChEBI" id="CHEBI:15378"/>
        <dbReference type="ChEBI" id="CHEBI:37565"/>
        <dbReference type="ChEBI" id="CHEBI:43474"/>
        <dbReference type="ChEBI" id="CHEBI:58189"/>
    </reaction>
</comment>
<comment type="subunit">
    <text evidence="1">COPII is composed of at least 5 proteins: the sec23/24 complex, the sec13/31 complex and sar1.</text>
</comment>
<comment type="subcellular location">
    <subcellularLocation>
        <location evidence="1">Cytoplasmic vesicle</location>
        <location evidence="1">COPII-coated vesicle membrane</location>
        <topology evidence="1">Peripheral membrane protein</topology>
        <orientation evidence="1">Cytoplasmic side</orientation>
    </subcellularLocation>
    <subcellularLocation>
        <location evidence="1">Endoplasmic reticulum membrane</location>
        <topology evidence="1">Peripheral membrane protein</topology>
        <orientation evidence="1">Cytoplasmic side</orientation>
    </subcellularLocation>
    <subcellularLocation>
        <location evidence="1">Golgi apparatus membrane</location>
        <topology evidence="1">Peripheral membrane protein</topology>
        <orientation evidence="1">Cytoplasmic side</orientation>
    </subcellularLocation>
</comment>
<comment type="similarity">
    <text evidence="2">Belongs to the small GTPase superfamily. SAR1 family.</text>
</comment>
<name>SAR1_ASPNG</name>
<gene>
    <name type="primary">sar1</name>
    <name type="synonym">sarA</name>
</gene>
<protein>
    <recommendedName>
        <fullName>Small COPII coat GTPase SAR1</fullName>
        <ecNumber>3.6.5.-</ecNumber>
    </recommendedName>
</protein>
<feature type="chain" id="PRO_0000206271" description="Small COPII coat GTPase SAR1">
    <location>
        <begin position="1"/>
        <end position="189"/>
    </location>
</feature>
<feature type="binding site" evidence="1">
    <location>
        <begin position="27"/>
        <end position="34"/>
    </location>
    <ligand>
        <name>GTP</name>
        <dbReference type="ChEBI" id="CHEBI:37565"/>
    </ligand>
</feature>
<feature type="binding site" evidence="1">
    <location>
        <begin position="70"/>
        <end position="73"/>
    </location>
    <ligand>
        <name>GTP</name>
        <dbReference type="ChEBI" id="CHEBI:37565"/>
    </ligand>
</feature>
<feature type="binding site" evidence="1">
    <location>
        <begin position="129"/>
        <end position="132"/>
    </location>
    <ligand>
        <name>GTP</name>
        <dbReference type="ChEBI" id="CHEBI:37565"/>
    </ligand>
</feature>
<proteinExistence type="inferred from homology"/>
<evidence type="ECO:0000250" key="1"/>
<evidence type="ECO:0000305" key="2"/>
<accession>P0C950</accession>
<accession>A2Q8E3</accession>
<accession>P52886</accession>
<keyword id="KW-0968">Cytoplasmic vesicle</keyword>
<keyword id="KW-0256">Endoplasmic reticulum</keyword>
<keyword id="KW-0931">ER-Golgi transport</keyword>
<keyword id="KW-0333">Golgi apparatus</keyword>
<keyword id="KW-0342">GTP-binding</keyword>
<keyword id="KW-0378">Hydrolase</keyword>
<keyword id="KW-0472">Membrane</keyword>
<keyword id="KW-0547">Nucleotide-binding</keyword>
<keyword id="KW-0653">Protein transport</keyword>
<keyword id="KW-0813">Transport</keyword>
<sequence>MWLINWFYDLLASLGLLNKHAKLLFLGLDNAGKTTLLHMLKNDRVAILQPTAHPTSEELAIGNNRFTTFDLGGHQQARRLWKDYFPEVSGIVFLVDAKDHECFPESKAELDALLAMEELAKVPFLILGNKIDHPDAVSEDDVRHQLGLYQTTGKGKVPLEGIRPIEVFMCSVVMRQGYGEGIRWLSQYV</sequence>
<dbReference type="EC" id="3.6.5.-"/>
<dbReference type="EMBL" id="Z67742">
    <property type="protein sequence ID" value="CAA91555.1"/>
    <property type="molecule type" value="Genomic_DNA"/>
</dbReference>
<dbReference type="SMR" id="P0C950"/>
<dbReference type="PaxDb" id="5061-CADANGAP00000383"/>
<dbReference type="VEuPathDB" id="FungiDB:An01g04040"/>
<dbReference type="VEuPathDB" id="FungiDB:ASPNIDRAFT2_1142222"/>
<dbReference type="VEuPathDB" id="FungiDB:ATCC64974_19930"/>
<dbReference type="VEuPathDB" id="FungiDB:M747DRAFT_317527"/>
<dbReference type="eggNOG" id="KOG0077">
    <property type="taxonomic scope" value="Eukaryota"/>
</dbReference>
<dbReference type="GO" id="GO:0005789">
    <property type="term" value="C:endoplasmic reticulum membrane"/>
    <property type="evidence" value="ECO:0007669"/>
    <property type="project" value="UniProtKB-SubCell"/>
</dbReference>
<dbReference type="GO" id="GO:0012507">
    <property type="term" value="C:ER to Golgi transport vesicle membrane"/>
    <property type="evidence" value="ECO:0007669"/>
    <property type="project" value="UniProtKB-SubCell"/>
</dbReference>
<dbReference type="GO" id="GO:0000139">
    <property type="term" value="C:Golgi membrane"/>
    <property type="evidence" value="ECO:0007669"/>
    <property type="project" value="UniProtKB-SubCell"/>
</dbReference>
<dbReference type="GO" id="GO:0005525">
    <property type="term" value="F:GTP binding"/>
    <property type="evidence" value="ECO:0007669"/>
    <property type="project" value="UniProtKB-KW"/>
</dbReference>
<dbReference type="GO" id="GO:0003924">
    <property type="term" value="F:GTPase activity"/>
    <property type="evidence" value="ECO:0007669"/>
    <property type="project" value="InterPro"/>
</dbReference>
<dbReference type="GO" id="GO:0006886">
    <property type="term" value="P:intracellular protein transport"/>
    <property type="evidence" value="ECO:0007669"/>
    <property type="project" value="InterPro"/>
</dbReference>
<dbReference type="GO" id="GO:0016192">
    <property type="term" value="P:vesicle-mediated transport"/>
    <property type="evidence" value="ECO:0007669"/>
    <property type="project" value="UniProtKB-KW"/>
</dbReference>
<dbReference type="CDD" id="cd00879">
    <property type="entry name" value="Sar1"/>
    <property type="match status" value="1"/>
</dbReference>
<dbReference type="FunFam" id="3.40.50.300:FF:000161">
    <property type="entry name" value="Small COPII coat GTPase"/>
    <property type="match status" value="1"/>
</dbReference>
<dbReference type="Gene3D" id="3.40.50.300">
    <property type="entry name" value="P-loop containing nucleotide triphosphate hydrolases"/>
    <property type="match status" value="1"/>
</dbReference>
<dbReference type="InterPro" id="IPR027417">
    <property type="entry name" value="P-loop_NTPase"/>
</dbReference>
<dbReference type="InterPro" id="IPR005225">
    <property type="entry name" value="Small_GTP-bd"/>
</dbReference>
<dbReference type="InterPro" id="IPR006689">
    <property type="entry name" value="Small_GTPase_ARF/SAR"/>
</dbReference>
<dbReference type="InterPro" id="IPR006687">
    <property type="entry name" value="Small_GTPase_SAR1"/>
</dbReference>
<dbReference type="NCBIfam" id="TIGR00231">
    <property type="entry name" value="small_GTP"/>
    <property type="match status" value="1"/>
</dbReference>
<dbReference type="PANTHER" id="PTHR45684">
    <property type="entry name" value="RE74312P"/>
    <property type="match status" value="1"/>
</dbReference>
<dbReference type="Pfam" id="PF00025">
    <property type="entry name" value="Arf"/>
    <property type="match status" value="1"/>
</dbReference>
<dbReference type="PRINTS" id="PR00328">
    <property type="entry name" value="SAR1GTPBP"/>
</dbReference>
<dbReference type="SMART" id="SM00177">
    <property type="entry name" value="ARF"/>
    <property type="match status" value="1"/>
</dbReference>
<dbReference type="SMART" id="SM00178">
    <property type="entry name" value="SAR"/>
    <property type="match status" value="1"/>
</dbReference>
<dbReference type="SUPFAM" id="SSF52540">
    <property type="entry name" value="P-loop containing nucleoside triphosphate hydrolases"/>
    <property type="match status" value="1"/>
</dbReference>
<dbReference type="PROSITE" id="PS51422">
    <property type="entry name" value="SAR1"/>
    <property type="match status" value="1"/>
</dbReference>